<sequence length="387" mass="43014">MDQRKGSGSDANGGLAEATASRLRFEDPDEVMEENPAAAAATVGAEEEGGEGGGGEEVIGSDKTSADYYFDSYSHFGIHEEMLKDVVRTKSYQNVITQNSFLFKDKIVLDVGAGTGILSLFCAKAGAKHVYAIECSQMADMAKEIVKTNGYSNVITVIKGKVEEIELPVPKVDVIISEWMGYFLLFENMLNTVLYARDKWLADGGVVLPDKASLHLTAIEDAEYKEDKIEFWNNVYGFDMRCIKKQAMMEPLVDTVDANQIVTNCQLLKTMDISKMTPGDASFTVPFKLVAERNDYIHALVAYFNVSFTKCHKMMGFSTGPRSKATHWKQTVLYLEDVLTICEGETITGSMTVTPNKKNPRDIDIKLCYALSGHRCQVSRTQHYKMR</sequence>
<gene>
    <name type="primary">PRMT1</name>
    <name type="ordered locus">Os09g0359800</name>
    <name type="ordered locus">LOC_Os09g19560</name>
    <name type="ORF">OsJ_027926</name>
    <name type="ORF">P0711F01.27-1</name>
</gene>
<dbReference type="EC" id="2.1.1.319" evidence="3"/>
<dbReference type="EMBL" id="AP005508">
    <property type="protein sequence ID" value="BAD23315.1"/>
    <property type="status" value="ALT_SEQ"/>
    <property type="molecule type" value="Genomic_DNA"/>
</dbReference>
<dbReference type="EMBL" id="AP008215">
    <property type="protein sequence ID" value="BAF24889.1"/>
    <property type="molecule type" value="Genomic_DNA"/>
</dbReference>
<dbReference type="EMBL" id="AP014965">
    <property type="protein sequence ID" value="BAT07684.1"/>
    <property type="molecule type" value="Genomic_DNA"/>
</dbReference>
<dbReference type="EMBL" id="CM000146">
    <property type="protein sequence ID" value="EAZ44443.1"/>
    <property type="status" value="ALT_SEQ"/>
    <property type="molecule type" value="Genomic_DNA"/>
</dbReference>
<dbReference type="EMBL" id="AK099826">
    <property type="protein sequence ID" value="BAG94311.1"/>
    <property type="molecule type" value="mRNA"/>
</dbReference>
<dbReference type="RefSeq" id="XP_015612441.1">
    <property type="nucleotide sequence ID" value="XM_015756955.1"/>
</dbReference>
<dbReference type="SMR" id="Q0J2C6"/>
<dbReference type="FunCoup" id="Q0J2C6">
    <property type="interactions" value="2428"/>
</dbReference>
<dbReference type="STRING" id="39947.Q0J2C6"/>
<dbReference type="PaxDb" id="39947-Q0J2C6"/>
<dbReference type="EnsemblPlants" id="Os09t0359800-01">
    <property type="protein sequence ID" value="Os09t0359800-01"/>
    <property type="gene ID" value="Os09g0359800"/>
</dbReference>
<dbReference type="Gramene" id="Os09t0359800-01">
    <property type="protein sequence ID" value="Os09t0359800-01"/>
    <property type="gene ID" value="Os09g0359800"/>
</dbReference>
<dbReference type="KEGG" id="dosa:Os09g0359800"/>
<dbReference type="eggNOG" id="KOG1499">
    <property type="taxonomic scope" value="Eukaryota"/>
</dbReference>
<dbReference type="HOGENOM" id="CLU_017375_1_2_1"/>
<dbReference type="InParanoid" id="Q0J2C6"/>
<dbReference type="OMA" id="CTHTKVK"/>
<dbReference type="OrthoDB" id="7848332at2759"/>
<dbReference type="Proteomes" id="UP000000763">
    <property type="component" value="Chromosome 9"/>
</dbReference>
<dbReference type="Proteomes" id="UP000007752">
    <property type="component" value="Chromosome 9"/>
</dbReference>
<dbReference type="Proteomes" id="UP000059680">
    <property type="component" value="Chromosome 9"/>
</dbReference>
<dbReference type="ExpressionAtlas" id="Q0J2C6">
    <property type="expression patterns" value="baseline and differential"/>
</dbReference>
<dbReference type="GO" id="GO:0005634">
    <property type="term" value="C:nucleus"/>
    <property type="evidence" value="ECO:0000318"/>
    <property type="project" value="GO_Central"/>
</dbReference>
<dbReference type="GO" id="GO:0042054">
    <property type="term" value="F:histone methyltransferase activity"/>
    <property type="evidence" value="ECO:0000318"/>
    <property type="project" value="GO_Central"/>
</dbReference>
<dbReference type="GO" id="GO:0016274">
    <property type="term" value="F:protein-arginine N-methyltransferase activity"/>
    <property type="evidence" value="ECO:0000318"/>
    <property type="project" value="GO_Central"/>
</dbReference>
<dbReference type="GO" id="GO:0035242">
    <property type="term" value="F:protein-arginine omega-N asymmetric methyltransferase activity"/>
    <property type="evidence" value="ECO:0007669"/>
    <property type="project" value="RHEA"/>
</dbReference>
<dbReference type="GO" id="GO:0035241">
    <property type="term" value="F:protein-arginine omega-N monomethyltransferase activity"/>
    <property type="evidence" value="ECO:0007669"/>
    <property type="project" value="RHEA"/>
</dbReference>
<dbReference type="GO" id="GO:0006338">
    <property type="term" value="P:chromatin remodeling"/>
    <property type="evidence" value="ECO:0000318"/>
    <property type="project" value="GO_Central"/>
</dbReference>
<dbReference type="GO" id="GO:0032259">
    <property type="term" value="P:methylation"/>
    <property type="evidence" value="ECO:0007669"/>
    <property type="project" value="UniProtKB-KW"/>
</dbReference>
<dbReference type="GO" id="GO:0006355">
    <property type="term" value="P:regulation of DNA-templated transcription"/>
    <property type="evidence" value="ECO:0000318"/>
    <property type="project" value="GO_Central"/>
</dbReference>
<dbReference type="CDD" id="cd02440">
    <property type="entry name" value="AdoMet_MTases"/>
    <property type="match status" value="1"/>
</dbReference>
<dbReference type="FunFam" id="2.70.160.11:FF:000001">
    <property type="entry name" value="Blast:Protein arginine N-methyltransferase 1"/>
    <property type="match status" value="1"/>
</dbReference>
<dbReference type="FunFam" id="3.40.50.150:FF:000116">
    <property type="entry name" value="probable protein arginine N-methyltransferase 1"/>
    <property type="match status" value="1"/>
</dbReference>
<dbReference type="Gene3D" id="2.70.160.11">
    <property type="entry name" value="Hnrnp arginine n-methyltransferase1"/>
    <property type="match status" value="1"/>
</dbReference>
<dbReference type="Gene3D" id="3.40.50.150">
    <property type="entry name" value="Vaccinia Virus protein VP39"/>
    <property type="match status" value="1"/>
</dbReference>
<dbReference type="InterPro" id="IPR025799">
    <property type="entry name" value="Arg_MeTrfase"/>
</dbReference>
<dbReference type="InterPro" id="IPR041698">
    <property type="entry name" value="Methyltransf_25"/>
</dbReference>
<dbReference type="InterPro" id="IPR055135">
    <property type="entry name" value="PRMT_dom"/>
</dbReference>
<dbReference type="InterPro" id="IPR029063">
    <property type="entry name" value="SAM-dependent_MTases_sf"/>
</dbReference>
<dbReference type="PANTHER" id="PTHR11006">
    <property type="entry name" value="PROTEIN ARGININE N-METHYLTRANSFERASE"/>
    <property type="match status" value="1"/>
</dbReference>
<dbReference type="PANTHER" id="PTHR11006:SF53">
    <property type="entry name" value="PROTEIN ARGININE N-METHYLTRANSFERASE 3"/>
    <property type="match status" value="1"/>
</dbReference>
<dbReference type="Pfam" id="PF13649">
    <property type="entry name" value="Methyltransf_25"/>
    <property type="match status" value="1"/>
</dbReference>
<dbReference type="Pfam" id="PF22528">
    <property type="entry name" value="PRMT_C"/>
    <property type="match status" value="1"/>
</dbReference>
<dbReference type="SUPFAM" id="SSF53335">
    <property type="entry name" value="S-adenosyl-L-methionine-dependent methyltransferases"/>
    <property type="match status" value="1"/>
</dbReference>
<dbReference type="PROSITE" id="PS51678">
    <property type="entry name" value="SAM_MT_PRMT"/>
    <property type="match status" value="1"/>
</dbReference>
<evidence type="ECO:0000250" key="1"/>
<evidence type="ECO:0000250" key="2">
    <source>
        <dbReference type="UniProtKB" id="A8IEF3"/>
    </source>
</evidence>
<evidence type="ECO:0000250" key="3">
    <source>
        <dbReference type="UniProtKB" id="P38074"/>
    </source>
</evidence>
<evidence type="ECO:0000250" key="4">
    <source>
        <dbReference type="UniProtKB" id="Q63009"/>
    </source>
</evidence>
<evidence type="ECO:0000255" key="5">
    <source>
        <dbReference type="PROSITE-ProRule" id="PRU01015"/>
    </source>
</evidence>
<evidence type="ECO:0000256" key="6">
    <source>
        <dbReference type="SAM" id="MobiDB-lite"/>
    </source>
</evidence>
<evidence type="ECO:0000305" key="7"/>
<proteinExistence type="evidence at transcript level"/>
<keyword id="KW-0489">Methyltransferase</keyword>
<keyword id="KW-0539">Nucleus</keyword>
<keyword id="KW-1185">Reference proteome</keyword>
<keyword id="KW-0949">S-adenosyl-L-methionine</keyword>
<keyword id="KW-0808">Transferase</keyword>
<organism>
    <name type="scientific">Oryza sativa subsp. japonica</name>
    <name type="common">Rice</name>
    <dbReference type="NCBI Taxonomy" id="39947"/>
    <lineage>
        <taxon>Eukaryota</taxon>
        <taxon>Viridiplantae</taxon>
        <taxon>Streptophyta</taxon>
        <taxon>Embryophyta</taxon>
        <taxon>Tracheophyta</taxon>
        <taxon>Spermatophyta</taxon>
        <taxon>Magnoliopsida</taxon>
        <taxon>Liliopsida</taxon>
        <taxon>Poales</taxon>
        <taxon>Poaceae</taxon>
        <taxon>BOP clade</taxon>
        <taxon>Oryzoideae</taxon>
        <taxon>Oryzeae</taxon>
        <taxon>Oryzinae</taxon>
        <taxon>Oryza</taxon>
        <taxon>Oryza sativa</taxon>
    </lineage>
</organism>
<accession>Q0J2C6</accession>
<accession>A3BY04</accession>
<accession>B7EPL4</accession>
<accession>Q6K563</accession>
<name>ANM1_ORYSJ</name>
<feature type="chain" id="PRO_0000293989" description="Protein arginine N-methyltransferase 1">
    <location>
        <begin position="1"/>
        <end position="387"/>
    </location>
</feature>
<feature type="domain" description="SAM-dependent MTase PRMT-type" evidence="5">
    <location>
        <begin position="66"/>
        <end position="387"/>
    </location>
</feature>
<feature type="region of interest" description="Disordered" evidence="6">
    <location>
        <begin position="1"/>
        <end position="60"/>
    </location>
</feature>
<feature type="compositionally biased region" description="Low complexity" evidence="6">
    <location>
        <begin position="34"/>
        <end position="44"/>
    </location>
</feature>
<feature type="active site" evidence="4">
    <location>
        <position position="178"/>
    </location>
</feature>
<feature type="active site" evidence="4">
    <location>
        <position position="187"/>
    </location>
</feature>
<feature type="binding site" evidence="4">
    <location>
        <position position="79"/>
    </location>
    <ligand>
        <name>S-adenosyl-L-methionine</name>
        <dbReference type="ChEBI" id="CHEBI:59789"/>
    </ligand>
</feature>
<feature type="binding site" evidence="4">
    <location>
        <position position="88"/>
    </location>
    <ligand>
        <name>S-adenosyl-L-methionine</name>
        <dbReference type="ChEBI" id="CHEBI:59789"/>
    </ligand>
</feature>
<feature type="binding site" evidence="4">
    <location>
        <position position="112"/>
    </location>
    <ligand>
        <name>S-adenosyl-L-methionine</name>
        <dbReference type="ChEBI" id="CHEBI:59789"/>
    </ligand>
</feature>
<feature type="binding site" evidence="4">
    <location>
        <position position="134"/>
    </location>
    <ligand>
        <name>S-adenosyl-L-methionine</name>
        <dbReference type="ChEBI" id="CHEBI:59789"/>
    </ligand>
</feature>
<feature type="binding site" evidence="4">
    <location>
        <position position="163"/>
    </location>
    <ligand>
        <name>S-adenosyl-L-methionine</name>
        <dbReference type="ChEBI" id="CHEBI:59789"/>
    </ligand>
</feature>
<comment type="function">
    <text evidence="2">Arginine methyltransferase that methylates (mono and asymmetric dimethylation) the guanidino nitrogens of arginyl residues present in target proteins.</text>
</comment>
<comment type="catalytic activity">
    <reaction evidence="3">
        <text>L-arginyl-[protein] + S-adenosyl-L-methionine = N(omega)-methyl-L-arginyl-[protein] + S-adenosyl-L-homocysteine + H(+)</text>
        <dbReference type="Rhea" id="RHEA:48100"/>
        <dbReference type="Rhea" id="RHEA-COMP:10532"/>
        <dbReference type="Rhea" id="RHEA-COMP:11990"/>
        <dbReference type="ChEBI" id="CHEBI:15378"/>
        <dbReference type="ChEBI" id="CHEBI:29965"/>
        <dbReference type="ChEBI" id="CHEBI:57856"/>
        <dbReference type="ChEBI" id="CHEBI:59789"/>
        <dbReference type="ChEBI" id="CHEBI:65280"/>
    </reaction>
    <physiologicalReaction direction="left-to-right" evidence="3">
        <dbReference type="Rhea" id="RHEA:48101"/>
    </physiologicalReaction>
</comment>
<comment type="catalytic activity">
    <reaction evidence="3">
        <text>L-arginyl-[protein] + 2 S-adenosyl-L-methionine = N(omega),N(omega)-dimethyl-L-arginyl-[protein] + 2 S-adenosyl-L-homocysteine + 2 H(+)</text>
        <dbReference type="Rhea" id="RHEA:48096"/>
        <dbReference type="Rhea" id="RHEA-COMP:10532"/>
        <dbReference type="Rhea" id="RHEA-COMP:11991"/>
        <dbReference type="ChEBI" id="CHEBI:15378"/>
        <dbReference type="ChEBI" id="CHEBI:29965"/>
        <dbReference type="ChEBI" id="CHEBI:57856"/>
        <dbReference type="ChEBI" id="CHEBI:59789"/>
        <dbReference type="ChEBI" id="CHEBI:61897"/>
        <dbReference type="EC" id="2.1.1.319"/>
    </reaction>
    <physiologicalReaction direction="left-to-right" evidence="3">
        <dbReference type="Rhea" id="RHEA:48097"/>
    </physiologicalReaction>
</comment>
<comment type="subcellular location">
    <subcellularLocation>
        <location evidence="1">Nucleus</location>
    </subcellularLocation>
</comment>
<comment type="similarity">
    <text evidence="5">Belongs to the class I-like SAM-binding methyltransferase superfamily. Protein arginine N-methyltransferase family.</text>
</comment>
<comment type="sequence caution" evidence="7">
    <conflict type="erroneous gene model prediction">
        <sequence resource="EMBL-CDS" id="BAD23315"/>
    </conflict>
</comment>
<comment type="sequence caution" evidence="7">
    <conflict type="erroneous gene model prediction">
        <sequence resource="EMBL-CDS" id="EAZ44443"/>
    </conflict>
</comment>
<protein>
    <recommendedName>
        <fullName>Protein arginine N-methyltransferase 1</fullName>
        <ecNumber evidence="3">2.1.1.319</ecNumber>
    </recommendedName>
</protein>
<reference key="1">
    <citation type="journal article" date="2005" name="Nature">
        <title>The map-based sequence of the rice genome.</title>
        <authorList>
            <consortium name="International rice genome sequencing project (IRGSP)"/>
        </authorList>
    </citation>
    <scope>NUCLEOTIDE SEQUENCE [LARGE SCALE GENOMIC DNA]</scope>
    <source>
        <strain>cv. Nipponbare</strain>
    </source>
</reference>
<reference key="2">
    <citation type="journal article" date="2008" name="Nucleic Acids Res.">
        <title>The rice annotation project database (RAP-DB): 2008 update.</title>
        <authorList>
            <consortium name="The rice annotation project (RAP)"/>
        </authorList>
    </citation>
    <scope>GENOME REANNOTATION</scope>
    <source>
        <strain>cv. Nipponbare</strain>
    </source>
</reference>
<reference key="3">
    <citation type="journal article" date="2013" name="Rice">
        <title>Improvement of the Oryza sativa Nipponbare reference genome using next generation sequence and optical map data.</title>
        <authorList>
            <person name="Kawahara Y."/>
            <person name="de la Bastide M."/>
            <person name="Hamilton J.P."/>
            <person name="Kanamori H."/>
            <person name="McCombie W.R."/>
            <person name="Ouyang S."/>
            <person name="Schwartz D.C."/>
            <person name="Tanaka T."/>
            <person name="Wu J."/>
            <person name="Zhou S."/>
            <person name="Childs K.L."/>
            <person name="Davidson R.M."/>
            <person name="Lin H."/>
            <person name="Quesada-Ocampo L."/>
            <person name="Vaillancourt B."/>
            <person name="Sakai H."/>
            <person name="Lee S.S."/>
            <person name="Kim J."/>
            <person name="Numa H."/>
            <person name="Itoh T."/>
            <person name="Buell C.R."/>
            <person name="Matsumoto T."/>
        </authorList>
    </citation>
    <scope>GENOME REANNOTATION</scope>
    <source>
        <strain>cv. Nipponbare</strain>
    </source>
</reference>
<reference key="4">
    <citation type="journal article" date="2005" name="PLoS Biol.">
        <title>The genomes of Oryza sativa: a history of duplications.</title>
        <authorList>
            <person name="Yu J."/>
            <person name="Wang J."/>
            <person name="Lin W."/>
            <person name="Li S."/>
            <person name="Li H."/>
            <person name="Zhou J."/>
            <person name="Ni P."/>
            <person name="Dong W."/>
            <person name="Hu S."/>
            <person name="Zeng C."/>
            <person name="Zhang J."/>
            <person name="Zhang Y."/>
            <person name="Li R."/>
            <person name="Xu Z."/>
            <person name="Li S."/>
            <person name="Li X."/>
            <person name="Zheng H."/>
            <person name="Cong L."/>
            <person name="Lin L."/>
            <person name="Yin J."/>
            <person name="Geng J."/>
            <person name="Li G."/>
            <person name="Shi J."/>
            <person name="Liu J."/>
            <person name="Lv H."/>
            <person name="Li J."/>
            <person name="Wang J."/>
            <person name="Deng Y."/>
            <person name="Ran L."/>
            <person name="Shi X."/>
            <person name="Wang X."/>
            <person name="Wu Q."/>
            <person name="Li C."/>
            <person name="Ren X."/>
            <person name="Wang J."/>
            <person name="Wang X."/>
            <person name="Li D."/>
            <person name="Liu D."/>
            <person name="Zhang X."/>
            <person name="Ji Z."/>
            <person name="Zhao W."/>
            <person name="Sun Y."/>
            <person name="Zhang Z."/>
            <person name="Bao J."/>
            <person name="Han Y."/>
            <person name="Dong L."/>
            <person name="Ji J."/>
            <person name="Chen P."/>
            <person name="Wu S."/>
            <person name="Liu J."/>
            <person name="Xiao Y."/>
            <person name="Bu D."/>
            <person name="Tan J."/>
            <person name="Yang L."/>
            <person name="Ye C."/>
            <person name="Zhang J."/>
            <person name="Xu J."/>
            <person name="Zhou Y."/>
            <person name="Yu Y."/>
            <person name="Zhang B."/>
            <person name="Zhuang S."/>
            <person name="Wei H."/>
            <person name="Liu B."/>
            <person name="Lei M."/>
            <person name="Yu H."/>
            <person name="Li Y."/>
            <person name="Xu H."/>
            <person name="Wei S."/>
            <person name="He X."/>
            <person name="Fang L."/>
            <person name="Zhang Z."/>
            <person name="Zhang Y."/>
            <person name="Huang X."/>
            <person name="Su Z."/>
            <person name="Tong W."/>
            <person name="Li J."/>
            <person name="Tong Z."/>
            <person name="Li S."/>
            <person name="Ye J."/>
            <person name="Wang L."/>
            <person name="Fang L."/>
            <person name="Lei T."/>
            <person name="Chen C.-S."/>
            <person name="Chen H.-C."/>
            <person name="Xu Z."/>
            <person name="Li H."/>
            <person name="Huang H."/>
            <person name="Zhang F."/>
            <person name="Xu H."/>
            <person name="Li N."/>
            <person name="Zhao C."/>
            <person name="Li S."/>
            <person name="Dong L."/>
            <person name="Huang Y."/>
            <person name="Li L."/>
            <person name="Xi Y."/>
            <person name="Qi Q."/>
            <person name="Li W."/>
            <person name="Zhang B."/>
            <person name="Hu W."/>
            <person name="Zhang Y."/>
            <person name="Tian X."/>
            <person name="Jiao Y."/>
            <person name="Liang X."/>
            <person name="Jin J."/>
            <person name="Gao L."/>
            <person name="Zheng W."/>
            <person name="Hao B."/>
            <person name="Liu S.-M."/>
            <person name="Wang W."/>
            <person name="Yuan L."/>
            <person name="Cao M."/>
            <person name="McDermott J."/>
            <person name="Samudrala R."/>
            <person name="Wang J."/>
            <person name="Wong G.K.-S."/>
            <person name="Yang H."/>
        </authorList>
    </citation>
    <scope>NUCLEOTIDE SEQUENCE [LARGE SCALE GENOMIC DNA]</scope>
    <source>
        <strain>cv. Nipponbare</strain>
    </source>
</reference>
<reference key="5">
    <citation type="journal article" date="2003" name="Science">
        <title>Collection, mapping, and annotation of over 28,000 cDNA clones from japonica rice.</title>
        <authorList>
            <consortium name="The rice full-length cDNA consortium"/>
        </authorList>
    </citation>
    <scope>NUCLEOTIDE SEQUENCE [LARGE SCALE MRNA]</scope>
    <source>
        <strain>cv. Nipponbare</strain>
    </source>
</reference>